<accession>A0M684</accession>
<keyword id="KW-0227">DNA damage</keyword>
<keyword id="KW-0233">DNA recombination</keyword>
<keyword id="KW-0234">DNA repair</keyword>
<name>RECO_CHRFK</name>
<gene>
    <name evidence="1" type="primary">recO</name>
    <name type="ordered locus">GFO_3185</name>
</gene>
<dbReference type="EMBL" id="CU207366">
    <property type="protein sequence ID" value="CAL68129.1"/>
    <property type="molecule type" value="Genomic_DNA"/>
</dbReference>
<dbReference type="RefSeq" id="WP_011711030.1">
    <property type="nucleotide sequence ID" value="NC_008571.1"/>
</dbReference>
<dbReference type="SMR" id="A0M684"/>
<dbReference type="STRING" id="411154.GFO_3185"/>
<dbReference type="KEGG" id="gfo:GFO_3185"/>
<dbReference type="eggNOG" id="COG1381">
    <property type="taxonomic scope" value="Bacteria"/>
</dbReference>
<dbReference type="HOGENOM" id="CLU_087596_1_0_10"/>
<dbReference type="OrthoDB" id="9789152at2"/>
<dbReference type="Proteomes" id="UP000000755">
    <property type="component" value="Chromosome"/>
</dbReference>
<dbReference type="GO" id="GO:0043590">
    <property type="term" value="C:bacterial nucleoid"/>
    <property type="evidence" value="ECO:0007669"/>
    <property type="project" value="TreeGrafter"/>
</dbReference>
<dbReference type="GO" id="GO:0006310">
    <property type="term" value="P:DNA recombination"/>
    <property type="evidence" value="ECO:0007669"/>
    <property type="project" value="UniProtKB-UniRule"/>
</dbReference>
<dbReference type="GO" id="GO:0006302">
    <property type="term" value="P:double-strand break repair"/>
    <property type="evidence" value="ECO:0007669"/>
    <property type="project" value="TreeGrafter"/>
</dbReference>
<dbReference type="Gene3D" id="2.40.50.140">
    <property type="entry name" value="Nucleic acid-binding proteins"/>
    <property type="match status" value="1"/>
</dbReference>
<dbReference type="Gene3D" id="1.20.1440.120">
    <property type="entry name" value="Recombination protein O, C-terminal domain"/>
    <property type="match status" value="1"/>
</dbReference>
<dbReference type="HAMAP" id="MF_00201">
    <property type="entry name" value="RecO"/>
    <property type="match status" value="1"/>
</dbReference>
<dbReference type="InterPro" id="IPR037278">
    <property type="entry name" value="ARFGAP/RecO"/>
</dbReference>
<dbReference type="InterPro" id="IPR022572">
    <property type="entry name" value="DNA_rep/recomb_RecO_N"/>
</dbReference>
<dbReference type="InterPro" id="IPR012340">
    <property type="entry name" value="NA-bd_OB-fold"/>
</dbReference>
<dbReference type="InterPro" id="IPR003717">
    <property type="entry name" value="RecO"/>
</dbReference>
<dbReference type="InterPro" id="IPR042242">
    <property type="entry name" value="RecO_C"/>
</dbReference>
<dbReference type="NCBIfam" id="TIGR00613">
    <property type="entry name" value="reco"/>
    <property type="match status" value="1"/>
</dbReference>
<dbReference type="PANTHER" id="PTHR33991">
    <property type="entry name" value="DNA REPAIR PROTEIN RECO"/>
    <property type="match status" value="1"/>
</dbReference>
<dbReference type="PANTHER" id="PTHR33991:SF1">
    <property type="entry name" value="DNA REPAIR PROTEIN RECO"/>
    <property type="match status" value="1"/>
</dbReference>
<dbReference type="Pfam" id="PF02565">
    <property type="entry name" value="RecO_C"/>
    <property type="match status" value="1"/>
</dbReference>
<dbReference type="Pfam" id="PF11967">
    <property type="entry name" value="RecO_N"/>
    <property type="match status" value="1"/>
</dbReference>
<dbReference type="SUPFAM" id="SSF57863">
    <property type="entry name" value="ArfGap/RecO-like zinc finger"/>
    <property type="match status" value="1"/>
</dbReference>
<dbReference type="SUPFAM" id="SSF50249">
    <property type="entry name" value="Nucleic acid-binding proteins"/>
    <property type="match status" value="1"/>
</dbReference>
<comment type="function">
    <text evidence="1">Involved in DNA repair and RecF pathway recombination.</text>
</comment>
<comment type="similarity">
    <text evidence="1">Belongs to the RecO family.</text>
</comment>
<reference key="1">
    <citation type="journal article" date="2006" name="Environ. Microbiol.">
        <title>Whole genome analysis of the marine Bacteroidetes'Gramella forsetii' reveals adaptations to degradation of polymeric organic matter.</title>
        <authorList>
            <person name="Bauer M."/>
            <person name="Kube M."/>
            <person name="Teeling H."/>
            <person name="Richter M."/>
            <person name="Lombardot T."/>
            <person name="Allers E."/>
            <person name="Wuerdemann C.A."/>
            <person name="Quast C."/>
            <person name="Kuhl H."/>
            <person name="Knaust F."/>
            <person name="Woebken D."/>
            <person name="Bischof K."/>
            <person name="Mussmann M."/>
            <person name="Choudhuri J.V."/>
            <person name="Meyer F."/>
            <person name="Reinhardt R."/>
            <person name="Amann R.I."/>
            <person name="Gloeckner F.O."/>
        </authorList>
    </citation>
    <scope>NUCLEOTIDE SEQUENCE [LARGE SCALE GENOMIC DNA]</scope>
    <source>
        <strain>DSM 17595 / CGMCC 1.15422 / KT0803</strain>
    </source>
</reference>
<sequence length="239" mass="27473">MLIHTKAIIISALKYGEADLIVKAYTLSDGLCTYMLKGVLKSRKGKFKASMFQSLTQLEIVANHRGGGKMEYLKEAKVTGNYQSLHTHPIKLAMVMFLAEMLRNAIREEESNEPLFHYLEYSFQFLDSTDKIANFHLLFLLNLTRYLGFQPEMGIKDLPVFNLLDGIFQDFSSNDYCIEGKNVDLLKSFLGTDFDALQYIKMNQTSRNDFLSMLLLYYELHIEGFRKPKSLSVLNEIFG</sequence>
<evidence type="ECO:0000255" key="1">
    <source>
        <dbReference type="HAMAP-Rule" id="MF_00201"/>
    </source>
</evidence>
<proteinExistence type="inferred from homology"/>
<protein>
    <recommendedName>
        <fullName evidence="1">DNA repair protein RecO</fullName>
    </recommendedName>
    <alternativeName>
        <fullName evidence="1">Recombination protein O</fullName>
    </alternativeName>
</protein>
<organism>
    <name type="scientific">Christiangramia forsetii (strain DSM 17595 / CGMCC 1.15422 / KT0803)</name>
    <name type="common">Gramella forsetii</name>
    <dbReference type="NCBI Taxonomy" id="411154"/>
    <lineage>
        <taxon>Bacteria</taxon>
        <taxon>Pseudomonadati</taxon>
        <taxon>Bacteroidota</taxon>
        <taxon>Flavobacteriia</taxon>
        <taxon>Flavobacteriales</taxon>
        <taxon>Flavobacteriaceae</taxon>
        <taxon>Christiangramia</taxon>
    </lineage>
</organism>
<feature type="chain" id="PRO_1000193381" description="DNA repair protein RecO">
    <location>
        <begin position="1"/>
        <end position="239"/>
    </location>
</feature>